<proteinExistence type="evidence at protein level"/>
<accession>P84558</accession>
<evidence type="ECO:0000255" key="1"/>
<evidence type="ECO:0000305" key="2"/>
<organism>
    <name type="scientific">Populus euphratica</name>
    <name type="common">Euphrates poplar</name>
    <dbReference type="NCBI Taxonomy" id="75702"/>
    <lineage>
        <taxon>Eukaryota</taxon>
        <taxon>Viridiplantae</taxon>
        <taxon>Streptophyta</taxon>
        <taxon>Embryophyta</taxon>
        <taxon>Tracheophyta</taxon>
        <taxon>Spermatophyta</taxon>
        <taxon>Magnoliopsida</taxon>
        <taxon>eudicotyledons</taxon>
        <taxon>Gunneridae</taxon>
        <taxon>Pentapetalae</taxon>
        <taxon>rosids</taxon>
        <taxon>fabids</taxon>
        <taxon>Malpighiales</taxon>
        <taxon>Salicaceae</taxon>
        <taxon>Saliceae</taxon>
        <taxon>Populus</taxon>
    </lineage>
</organism>
<dbReference type="Proteomes" id="UP000694918">
    <property type="component" value="Unplaced"/>
</dbReference>
<dbReference type="GO" id="GO:1990904">
    <property type="term" value="C:ribonucleoprotein complex"/>
    <property type="evidence" value="ECO:0007669"/>
    <property type="project" value="UniProtKB-KW"/>
</dbReference>
<dbReference type="GO" id="GO:0005840">
    <property type="term" value="C:ribosome"/>
    <property type="evidence" value="ECO:0007669"/>
    <property type="project" value="UniProtKB-KW"/>
</dbReference>
<keyword id="KW-0903">Direct protein sequencing</keyword>
<keyword id="KW-1185">Reference proteome</keyword>
<keyword id="KW-0687">Ribonucleoprotein</keyword>
<keyword id="KW-0689">Ribosomal protein</keyword>
<sequence>LGAEISSLTLEEAR</sequence>
<comment type="similarity">
    <text evidence="1">Belongs to the eukaryotic ribosomal protein P1/P2 family.</text>
</comment>
<protein>
    <recommendedName>
        <fullName evidence="2">Large ribosomal subunit protein P1</fullName>
    </recommendedName>
    <alternativeName>
        <fullName>50S ribosomal protein L12</fullName>
    </alternativeName>
</protein>
<feature type="chain" id="PRO_0000157624" description="Large ribosomal subunit protein P1">
    <location>
        <begin position="1" status="less than"/>
        <end position="14" status="greater than"/>
    </location>
</feature>
<feature type="non-terminal residue">
    <location>
        <position position="1"/>
    </location>
</feature>
<feature type="non-terminal residue">
    <location>
        <position position="14"/>
    </location>
</feature>
<name>RK12_POPEU</name>
<reference key="1">
    <citation type="journal article" date="2006" name="Ann. Bot.">
        <title>Proteome profiling of Populus euphratica Oliv. upon heat stress.</title>
        <authorList>
            <person name="Ferreira S."/>
            <person name="Hjernoe K."/>
            <person name="Larsen M."/>
            <person name="Wingsle G."/>
            <person name="Larsen P."/>
            <person name="Fey S."/>
            <person name="Roepstorff P."/>
            <person name="Pais M.S."/>
        </authorList>
    </citation>
    <scope>PROTEIN SEQUENCE</scope>
    <source>
        <tissue>Leaf</tissue>
    </source>
</reference>